<feature type="chain" id="PRO_1000148747" description="Acetyl-coenzyme A carboxylase carboxyl transferase subunit alpha">
    <location>
        <begin position="1"/>
        <end position="317"/>
    </location>
</feature>
<feature type="domain" description="CoA carboxyltransferase C-terminal" evidence="2">
    <location>
        <begin position="40"/>
        <end position="293"/>
    </location>
</feature>
<gene>
    <name evidence="1" type="primary">accA</name>
    <name type="ordered locus">NGR_c27260</name>
</gene>
<accession>C3MHX3</accession>
<name>ACCA_SINFN</name>
<sequence>MHNYLDFEKPISDLEGKILELKKLAGEDESVNTSDEVARLEGRVRDAMMEIYSKLSPWQKTQVARHPSRPHFLDYAAELFTEFTPLAGDRNFANDDAIQAGLARFRGAPVAVIGQEKGNDTKSRIKHNFGSPRPEGYRKAVRVMEMADRFGLPLITLVDTAGAYPGVNAEERGQAEAIARSTEMCLNVKVPIVTVVIGEGGSGGAIAIATGNRVYMLEHSIYSVISPEGAASILWRDSTRAKEAASNMKITAEDLKSLGVIDGIIPEPVGGAHRDPQAVIGRTGTVIADALKELSGRNGDELRADRRQKYLNIGRNL</sequence>
<comment type="function">
    <text evidence="1">Component of the acetyl coenzyme A carboxylase (ACC) complex. First, biotin carboxylase catalyzes the carboxylation of biotin on its carrier protein (BCCP) and then the CO(2) group is transferred by the carboxyltransferase to acetyl-CoA to form malonyl-CoA.</text>
</comment>
<comment type="catalytic activity">
    <reaction evidence="1">
        <text>N(6)-carboxybiotinyl-L-lysyl-[protein] + acetyl-CoA = N(6)-biotinyl-L-lysyl-[protein] + malonyl-CoA</text>
        <dbReference type="Rhea" id="RHEA:54728"/>
        <dbReference type="Rhea" id="RHEA-COMP:10505"/>
        <dbReference type="Rhea" id="RHEA-COMP:10506"/>
        <dbReference type="ChEBI" id="CHEBI:57288"/>
        <dbReference type="ChEBI" id="CHEBI:57384"/>
        <dbReference type="ChEBI" id="CHEBI:83144"/>
        <dbReference type="ChEBI" id="CHEBI:83145"/>
        <dbReference type="EC" id="2.1.3.15"/>
    </reaction>
</comment>
<comment type="pathway">
    <text evidence="1">Lipid metabolism; malonyl-CoA biosynthesis; malonyl-CoA from acetyl-CoA: step 1/1.</text>
</comment>
<comment type="subunit">
    <text evidence="1">Acetyl-CoA carboxylase is a heterohexamer composed of biotin carboxyl carrier protein (AccB), biotin carboxylase (AccC) and two subunits each of ACCase subunit alpha (AccA) and ACCase subunit beta (AccD).</text>
</comment>
<comment type="subcellular location">
    <subcellularLocation>
        <location evidence="1">Cytoplasm</location>
    </subcellularLocation>
</comment>
<comment type="similarity">
    <text evidence="1">Belongs to the AccA family.</text>
</comment>
<proteinExistence type="inferred from homology"/>
<keyword id="KW-0067">ATP-binding</keyword>
<keyword id="KW-0963">Cytoplasm</keyword>
<keyword id="KW-0275">Fatty acid biosynthesis</keyword>
<keyword id="KW-0276">Fatty acid metabolism</keyword>
<keyword id="KW-0444">Lipid biosynthesis</keyword>
<keyword id="KW-0443">Lipid metabolism</keyword>
<keyword id="KW-0547">Nucleotide-binding</keyword>
<keyword id="KW-1185">Reference proteome</keyword>
<keyword id="KW-0808">Transferase</keyword>
<organism>
    <name type="scientific">Sinorhizobium fredii (strain NBRC 101917 / NGR234)</name>
    <dbReference type="NCBI Taxonomy" id="394"/>
    <lineage>
        <taxon>Bacteria</taxon>
        <taxon>Pseudomonadati</taxon>
        <taxon>Pseudomonadota</taxon>
        <taxon>Alphaproteobacteria</taxon>
        <taxon>Hyphomicrobiales</taxon>
        <taxon>Rhizobiaceae</taxon>
        <taxon>Sinorhizobium/Ensifer group</taxon>
        <taxon>Sinorhizobium</taxon>
    </lineage>
</organism>
<reference key="1">
    <citation type="journal article" date="2009" name="Appl. Environ. Microbiol.">
        <title>Rhizobium sp. strain NGR234 possesses a remarkable number of secretion systems.</title>
        <authorList>
            <person name="Schmeisser C."/>
            <person name="Liesegang H."/>
            <person name="Krysciak D."/>
            <person name="Bakkou N."/>
            <person name="Le Quere A."/>
            <person name="Wollherr A."/>
            <person name="Heinemeyer I."/>
            <person name="Morgenstern B."/>
            <person name="Pommerening-Roeser A."/>
            <person name="Flores M."/>
            <person name="Palacios R."/>
            <person name="Brenner S."/>
            <person name="Gottschalk G."/>
            <person name="Schmitz R.A."/>
            <person name="Broughton W.J."/>
            <person name="Perret X."/>
            <person name="Strittmatter A.W."/>
            <person name="Streit W.R."/>
        </authorList>
    </citation>
    <scope>NUCLEOTIDE SEQUENCE [LARGE SCALE GENOMIC DNA]</scope>
    <source>
        <strain>NBRC 101917 / NGR234</strain>
    </source>
</reference>
<protein>
    <recommendedName>
        <fullName evidence="1">Acetyl-coenzyme A carboxylase carboxyl transferase subunit alpha</fullName>
        <shortName evidence="1">ACCase subunit alpha</shortName>
        <shortName evidence="1">Acetyl-CoA carboxylase carboxyltransferase subunit alpha</shortName>
        <ecNumber evidence="1">2.1.3.15</ecNumber>
    </recommendedName>
</protein>
<evidence type="ECO:0000255" key="1">
    <source>
        <dbReference type="HAMAP-Rule" id="MF_00823"/>
    </source>
</evidence>
<evidence type="ECO:0000255" key="2">
    <source>
        <dbReference type="PROSITE-ProRule" id="PRU01137"/>
    </source>
</evidence>
<dbReference type="EC" id="2.1.3.15" evidence="1"/>
<dbReference type="EMBL" id="CP001389">
    <property type="protein sequence ID" value="ACP26475.1"/>
    <property type="molecule type" value="Genomic_DNA"/>
</dbReference>
<dbReference type="RefSeq" id="WP_012709232.1">
    <property type="nucleotide sequence ID" value="NC_012587.1"/>
</dbReference>
<dbReference type="RefSeq" id="YP_002827228.1">
    <property type="nucleotide sequence ID" value="NC_012587.1"/>
</dbReference>
<dbReference type="SMR" id="C3MHX3"/>
<dbReference type="STRING" id="394.NGR_c27260"/>
<dbReference type="KEGG" id="rhi:NGR_c27260"/>
<dbReference type="PATRIC" id="fig|394.7.peg.5554"/>
<dbReference type="eggNOG" id="COG0825">
    <property type="taxonomic scope" value="Bacteria"/>
</dbReference>
<dbReference type="HOGENOM" id="CLU_015486_0_2_5"/>
<dbReference type="OrthoDB" id="9808023at2"/>
<dbReference type="UniPathway" id="UPA00655">
    <property type="reaction ID" value="UER00711"/>
</dbReference>
<dbReference type="Proteomes" id="UP000001054">
    <property type="component" value="Chromosome"/>
</dbReference>
<dbReference type="GO" id="GO:0009317">
    <property type="term" value="C:acetyl-CoA carboxylase complex"/>
    <property type="evidence" value="ECO:0007669"/>
    <property type="project" value="InterPro"/>
</dbReference>
<dbReference type="GO" id="GO:0003989">
    <property type="term" value="F:acetyl-CoA carboxylase activity"/>
    <property type="evidence" value="ECO:0007669"/>
    <property type="project" value="InterPro"/>
</dbReference>
<dbReference type="GO" id="GO:0005524">
    <property type="term" value="F:ATP binding"/>
    <property type="evidence" value="ECO:0007669"/>
    <property type="project" value="UniProtKB-KW"/>
</dbReference>
<dbReference type="GO" id="GO:0016743">
    <property type="term" value="F:carboxyl- or carbamoyltransferase activity"/>
    <property type="evidence" value="ECO:0007669"/>
    <property type="project" value="UniProtKB-UniRule"/>
</dbReference>
<dbReference type="GO" id="GO:0006633">
    <property type="term" value="P:fatty acid biosynthetic process"/>
    <property type="evidence" value="ECO:0007669"/>
    <property type="project" value="UniProtKB-KW"/>
</dbReference>
<dbReference type="GO" id="GO:2001295">
    <property type="term" value="P:malonyl-CoA biosynthetic process"/>
    <property type="evidence" value="ECO:0007669"/>
    <property type="project" value="UniProtKB-UniRule"/>
</dbReference>
<dbReference type="Gene3D" id="3.90.226.10">
    <property type="entry name" value="2-enoyl-CoA Hydratase, Chain A, domain 1"/>
    <property type="match status" value="1"/>
</dbReference>
<dbReference type="HAMAP" id="MF_00823">
    <property type="entry name" value="AcetylCoA_CT_alpha"/>
    <property type="match status" value="1"/>
</dbReference>
<dbReference type="InterPro" id="IPR001095">
    <property type="entry name" value="Acetyl_CoA_COase_a_su"/>
</dbReference>
<dbReference type="InterPro" id="IPR029045">
    <property type="entry name" value="ClpP/crotonase-like_dom_sf"/>
</dbReference>
<dbReference type="InterPro" id="IPR011763">
    <property type="entry name" value="COA_CT_C"/>
</dbReference>
<dbReference type="NCBIfam" id="TIGR00513">
    <property type="entry name" value="accA"/>
    <property type="match status" value="1"/>
</dbReference>
<dbReference type="NCBIfam" id="NF041504">
    <property type="entry name" value="AccA_sub"/>
    <property type="match status" value="1"/>
</dbReference>
<dbReference type="NCBIfam" id="NF004344">
    <property type="entry name" value="PRK05724.1"/>
    <property type="match status" value="1"/>
</dbReference>
<dbReference type="PANTHER" id="PTHR42853">
    <property type="entry name" value="ACETYL-COENZYME A CARBOXYLASE CARBOXYL TRANSFERASE SUBUNIT ALPHA"/>
    <property type="match status" value="1"/>
</dbReference>
<dbReference type="PANTHER" id="PTHR42853:SF3">
    <property type="entry name" value="ACETYL-COENZYME A CARBOXYLASE CARBOXYL TRANSFERASE SUBUNIT ALPHA, CHLOROPLASTIC"/>
    <property type="match status" value="1"/>
</dbReference>
<dbReference type="Pfam" id="PF03255">
    <property type="entry name" value="ACCA"/>
    <property type="match status" value="1"/>
</dbReference>
<dbReference type="PRINTS" id="PR01069">
    <property type="entry name" value="ACCCTRFRASEA"/>
</dbReference>
<dbReference type="SUPFAM" id="SSF52096">
    <property type="entry name" value="ClpP/crotonase"/>
    <property type="match status" value="1"/>
</dbReference>
<dbReference type="PROSITE" id="PS50989">
    <property type="entry name" value="COA_CT_CTER"/>
    <property type="match status" value="1"/>
</dbReference>